<comment type="function">
    <text evidence="1">Catalyzes amidations at positions B, D, E, and G on adenosylcobyrinic A,C-diamide. NH(2) groups are provided by glutamine, and one molecule of ATP is hydrogenolyzed for each amidation.</text>
</comment>
<comment type="pathway">
    <text evidence="1">Cofactor biosynthesis; adenosylcobalamin biosynthesis.</text>
</comment>
<comment type="similarity">
    <text evidence="1">Belongs to the CobB/CobQ family. CobQ subfamily.</text>
</comment>
<accession>A8AEQ8</accession>
<keyword id="KW-0169">Cobalamin biosynthesis</keyword>
<keyword id="KW-0315">Glutamine amidotransferase</keyword>
<keyword id="KW-1185">Reference proteome</keyword>
<evidence type="ECO:0000255" key="1">
    <source>
        <dbReference type="HAMAP-Rule" id="MF_00028"/>
    </source>
</evidence>
<name>COBQ_CITK8</name>
<dbReference type="EMBL" id="CP000822">
    <property type="protein sequence ID" value="ABV11971.1"/>
    <property type="molecule type" value="Genomic_DNA"/>
</dbReference>
<dbReference type="RefSeq" id="WP_012131792.1">
    <property type="nucleotide sequence ID" value="NC_009792.1"/>
</dbReference>
<dbReference type="SMR" id="A8AEQ8"/>
<dbReference type="STRING" id="290338.CKO_00819"/>
<dbReference type="GeneID" id="45135016"/>
<dbReference type="KEGG" id="cko:CKO_00819"/>
<dbReference type="HOGENOM" id="CLU_019250_2_2_6"/>
<dbReference type="OrthoDB" id="9808302at2"/>
<dbReference type="UniPathway" id="UPA00148"/>
<dbReference type="Proteomes" id="UP000008148">
    <property type="component" value="Chromosome"/>
</dbReference>
<dbReference type="GO" id="GO:0015420">
    <property type="term" value="F:ABC-type vitamin B12 transporter activity"/>
    <property type="evidence" value="ECO:0007669"/>
    <property type="project" value="UniProtKB-UniRule"/>
</dbReference>
<dbReference type="GO" id="GO:0003824">
    <property type="term" value="F:catalytic activity"/>
    <property type="evidence" value="ECO:0007669"/>
    <property type="project" value="InterPro"/>
</dbReference>
<dbReference type="GO" id="GO:0009236">
    <property type="term" value="P:cobalamin biosynthetic process"/>
    <property type="evidence" value="ECO:0007669"/>
    <property type="project" value="UniProtKB-UniRule"/>
</dbReference>
<dbReference type="CDD" id="cd05389">
    <property type="entry name" value="CobQ_N"/>
    <property type="match status" value="1"/>
</dbReference>
<dbReference type="CDD" id="cd01750">
    <property type="entry name" value="GATase1_CobQ"/>
    <property type="match status" value="1"/>
</dbReference>
<dbReference type="Gene3D" id="3.40.50.880">
    <property type="match status" value="1"/>
</dbReference>
<dbReference type="Gene3D" id="3.40.50.300">
    <property type="entry name" value="P-loop containing nucleotide triphosphate hydrolases"/>
    <property type="match status" value="1"/>
</dbReference>
<dbReference type="HAMAP" id="MF_00028">
    <property type="entry name" value="CobQ"/>
    <property type="match status" value="1"/>
</dbReference>
<dbReference type="InterPro" id="IPR029062">
    <property type="entry name" value="Class_I_gatase-like"/>
</dbReference>
<dbReference type="InterPro" id="IPR002586">
    <property type="entry name" value="CobQ/CobB/MinD/ParA_Nub-bd_dom"/>
</dbReference>
<dbReference type="InterPro" id="IPR033949">
    <property type="entry name" value="CobQ_GATase1"/>
</dbReference>
<dbReference type="InterPro" id="IPR047045">
    <property type="entry name" value="CobQ_N"/>
</dbReference>
<dbReference type="InterPro" id="IPR004459">
    <property type="entry name" value="CobQ_synth"/>
</dbReference>
<dbReference type="InterPro" id="IPR011698">
    <property type="entry name" value="GATase_3"/>
</dbReference>
<dbReference type="InterPro" id="IPR027417">
    <property type="entry name" value="P-loop_NTPase"/>
</dbReference>
<dbReference type="NCBIfam" id="TIGR00313">
    <property type="entry name" value="cobQ"/>
    <property type="match status" value="1"/>
</dbReference>
<dbReference type="NCBIfam" id="NF001989">
    <property type="entry name" value="PRK00784.1"/>
    <property type="match status" value="1"/>
</dbReference>
<dbReference type="PANTHER" id="PTHR21343:SF1">
    <property type="entry name" value="COBYRIC ACID SYNTHASE"/>
    <property type="match status" value="1"/>
</dbReference>
<dbReference type="PANTHER" id="PTHR21343">
    <property type="entry name" value="DETHIOBIOTIN SYNTHETASE"/>
    <property type="match status" value="1"/>
</dbReference>
<dbReference type="Pfam" id="PF01656">
    <property type="entry name" value="CbiA"/>
    <property type="match status" value="1"/>
</dbReference>
<dbReference type="Pfam" id="PF07685">
    <property type="entry name" value="GATase_3"/>
    <property type="match status" value="1"/>
</dbReference>
<dbReference type="SUPFAM" id="SSF52317">
    <property type="entry name" value="Class I glutamine amidotransferase-like"/>
    <property type="match status" value="1"/>
</dbReference>
<dbReference type="SUPFAM" id="SSF52540">
    <property type="entry name" value="P-loop containing nucleoside triphosphate hydrolases"/>
    <property type="match status" value="1"/>
</dbReference>
<dbReference type="PROSITE" id="PS51274">
    <property type="entry name" value="GATASE_COBBQ"/>
    <property type="match status" value="1"/>
</dbReference>
<gene>
    <name evidence="1" type="primary">cobQ</name>
    <name type="ordered locus">CKO_00819</name>
</gene>
<feature type="chain" id="PRO_1000002351" description="Cobyric acid synthase">
    <location>
        <begin position="1"/>
        <end position="506"/>
    </location>
</feature>
<feature type="domain" description="GATase cobBQ-type" evidence="1">
    <location>
        <begin position="251"/>
        <end position="448"/>
    </location>
</feature>
<feature type="active site" description="Nucleophile" evidence="1">
    <location>
        <position position="332"/>
    </location>
</feature>
<feature type="active site" evidence="1">
    <location>
        <position position="440"/>
    </location>
</feature>
<sequence>MTQAVMLQGTASDVGKSVLVAGLCRIFYQDGLRTAPFKSQNMALNSGITPDGKEMGRAQIFQAEAAGIAPDVRMNPVLLKPTSDRKAQVVLMGKVATDMDAVSYHEYKPRLREQILTVYNSLAQEYDVLVLEGAGSPAEINLRDRDIVNMGMAEMAQCPVILVADIDRGGVFASIYGTLALLHDSERARVKGVIINKFRGDVTLLYSGIEQIEALTGVPVLGVMPWLEVDLEDEDGVALQKGKYLRTDKRDIDIAVVQVPHISNFTDFNALAAQPDVRVRYVRHPEELAGADLIILPGSKNTLGDLVWLRESAMAHGVLQAHRQGVPVAGICGGYQMLGDTIIDEVESGLGTLPGLGLLNTVTHFAQDKTTTQVEGQMASALPGWLAAASGLAVRGYEIHMGETTLNAQCQPAMTLRKGENAIADGAVTDDGLVFGTYLHGLFDSDAFTRALVNGLRVRKGLTPLDHAFHYAQYKSQQFDLLADAMRQHIDIEKIYTIMQQHREPV</sequence>
<protein>
    <recommendedName>
        <fullName evidence="1">Cobyric acid synthase</fullName>
    </recommendedName>
</protein>
<organism>
    <name type="scientific">Citrobacter koseri (strain ATCC BAA-895 / CDC 4225-83 / SGSC4696)</name>
    <dbReference type="NCBI Taxonomy" id="290338"/>
    <lineage>
        <taxon>Bacteria</taxon>
        <taxon>Pseudomonadati</taxon>
        <taxon>Pseudomonadota</taxon>
        <taxon>Gammaproteobacteria</taxon>
        <taxon>Enterobacterales</taxon>
        <taxon>Enterobacteriaceae</taxon>
        <taxon>Citrobacter</taxon>
    </lineage>
</organism>
<proteinExistence type="inferred from homology"/>
<reference key="1">
    <citation type="submission" date="2007-08" db="EMBL/GenBank/DDBJ databases">
        <authorList>
            <consortium name="The Citrobacter koseri Genome Sequencing Project"/>
            <person name="McClelland M."/>
            <person name="Sanderson E.K."/>
            <person name="Porwollik S."/>
            <person name="Spieth J."/>
            <person name="Clifton W.S."/>
            <person name="Latreille P."/>
            <person name="Courtney L."/>
            <person name="Wang C."/>
            <person name="Pepin K."/>
            <person name="Bhonagiri V."/>
            <person name="Nash W."/>
            <person name="Johnson M."/>
            <person name="Thiruvilangam P."/>
            <person name="Wilson R."/>
        </authorList>
    </citation>
    <scope>NUCLEOTIDE SEQUENCE [LARGE SCALE GENOMIC DNA]</scope>
    <source>
        <strain>ATCC BAA-895 / CDC 4225-83 / SGSC4696</strain>
    </source>
</reference>